<organism>
    <name type="scientific">Yersinia pseudotuberculosis serotype I (strain IP32953)</name>
    <dbReference type="NCBI Taxonomy" id="273123"/>
    <lineage>
        <taxon>Bacteria</taxon>
        <taxon>Pseudomonadati</taxon>
        <taxon>Pseudomonadota</taxon>
        <taxon>Gammaproteobacteria</taxon>
        <taxon>Enterobacterales</taxon>
        <taxon>Yersiniaceae</taxon>
        <taxon>Yersinia</taxon>
    </lineage>
</organism>
<evidence type="ECO:0000255" key="1">
    <source>
        <dbReference type="HAMAP-Rule" id="MF_00188"/>
    </source>
</evidence>
<feature type="chain" id="PRO_1000020976" description="Protease HtpX">
    <location>
        <begin position="1"/>
        <end position="293"/>
    </location>
</feature>
<feature type="transmembrane region" description="Helical" evidence="1">
    <location>
        <begin position="4"/>
        <end position="24"/>
    </location>
</feature>
<feature type="transmembrane region" description="Helical" evidence="1">
    <location>
        <begin position="34"/>
        <end position="54"/>
    </location>
</feature>
<feature type="transmembrane region" description="Helical" evidence="1">
    <location>
        <begin position="158"/>
        <end position="178"/>
    </location>
</feature>
<feature type="transmembrane region" description="Helical" evidence="1">
    <location>
        <begin position="193"/>
        <end position="213"/>
    </location>
</feature>
<feature type="active site" evidence="1">
    <location>
        <position position="140"/>
    </location>
</feature>
<feature type="binding site" evidence="1">
    <location>
        <position position="139"/>
    </location>
    <ligand>
        <name>Zn(2+)</name>
        <dbReference type="ChEBI" id="CHEBI:29105"/>
        <note>catalytic</note>
    </ligand>
</feature>
<feature type="binding site" evidence="1">
    <location>
        <position position="143"/>
    </location>
    <ligand>
        <name>Zn(2+)</name>
        <dbReference type="ChEBI" id="CHEBI:29105"/>
        <note>catalytic</note>
    </ligand>
</feature>
<feature type="binding site" evidence="1">
    <location>
        <position position="222"/>
    </location>
    <ligand>
        <name>Zn(2+)</name>
        <dbReference type="ChEBI" id="CHEBI:29105"/>
        <note>catalytic</note>
    </ligand>
</feature>
<proteinExistence type="inferred from homology"/>
<reference key="1">
    <citation type="journal article" date="2004" name="Proc. Natl. Acad. Sci. U.S.A.">
        <title>Insights into the evolution of Yersinia pestis through whole-genome comparison with Yersinia pseudotuberculosis.</title>
        <authorList>
            <person name="Chain P.S.G."/>
            <person name="Carniel E."/>
            <person name="Larimer F.W."/>
            <person name="Lamerdin J."/>
            <person name="Stoutland P.O."/>
            <person name="Regala W.M."/>
            <person name="Georgescu A.M."/>
            <person name="Vergez L.M."/>
            <person name="Land M.L."/>
            <person name="Motin V.L."/>
            <person name="Brubaker R.R."/>
            <person name="Fowler J."/>
            <person name="Hinnebusch J."/>
            <person name="Marceau M."/>
            <person name="Medigue C."/>
            <person name="Simonet M."/>
            <person name="Chenal-Francisque V."/>
            <person name="Souza B."/>
            <person name="Dacheux D."/>
            <person name="Elliott J.M."/>
            <person name="Derbise A."/>
            <person name="Hauser L.J."/>
            <person name="Garcia E."/>
        </authorList>
    </citation>
    <scope>NUCLEOTIDE SEQUENCE [LARGE SCALE GENOMIC DNA]</scope>
    <source>
        <strain>IP32953</strain>
    </source>
</reference>
<accession>Q669V7</accession>
<name>HTPX_YERPS</name>
<dbReference type="EC" id="3.4.24.-" evidence="1"/>
<dbReference type="EMBL" id="BX936398">
    <property type="protein sequence ID" value="CAH21613.1"/>
    <property type="molecule type" value="Genomic_DNA"/>
</dbReference>
<dbReference type="RefSeq" id="WP_002210847.1">
    <property type="nucleotide sequence ID" value="NZ_CP009712.1"/>
</dbReference>
<dbReference type="SMR" id="Q669V7"/>
<dbReference type="MEROPS" id="M48.002"/>
<dbReference type="GeneID" id="57976872"/>
<dbReference type="KEGG" id="ypo:BZ17_81"/>
<dbReference type="KEGG" id="yps:YPTB2375"/>
<dbReference type="PATRIC" id="fig|273123.14.peg.85"/>
<dbReference type="Proteomes" id="UP000001011">
    <property type="component" value="Chromosome"/>
</dbReference>
<dbReference type="GO" id="GO:0005886">
    <property type="term" value="C:plasma membrane"/>
    <property type="evidence" value="ECO:0007669"/>
    <property type="project" value="UniProtKB-SubCell"/>
</dbReference>
<dbReference type="GO" id="GO:0004222">
    <property type="term" value="F:metalloendopeptidase activity"/>
    <property type="evidence" value="ECO:0007669"/>
    <property type="project" value="UniProtKB-UniRule"/>
</dbReference>
<dbReference type="GO" id="GO:0008270">
    <property type="term" value="F:zinc ion binding"/>
    <property type="evidence" value="ECO:0007669"/>
    <property type="project" value="UniProtKB-UniRule"/>
</dbReference>
<dbReference type="GO" id="GO:0006508">
    <property type="term" value="P:proteolysis"/>
    <property type="evidence" value="ECO:0007669"/>
    <property type="project" value="UniProtKB-KW"/>
</dbReference>
<dbReference type="CDD" id="cd07335">
    <property type="entry name" value="M48B_HtpX_like"/>
    <property type="match status" value="1"/>
</dbReference>
<dbReference type="FunFam" id="3.30.2010.10:FF:000001">
    <property type="entry name" value="Protease HtpX"/>
    <property type="match status" value="1"/>
</dbReference>
<dbReference type="Gene3D" id="3.30.2010.10">
    <property type="entry name" value="Metalloproteases ('zincins'), catalytic domain"/>
    <property type="match status" value="1"/>
</dbReference>
<dbReference type="HAMAP" id="MF_00188">
    <property type="entry name" value="Pept_M48_protease_HtpX"/>
    <property type="match status" value="1"/>
</dbReference>
<dbReference type="InterPro" id="IPR050083">
    <property type="entry name" value="HtpX_protease"/>
</dbReference>
<dbReference type="InterPro" id="IPR022919">
    <property type="entry name" value="Pept_M48_protease_HtpX"/>
</dbReference>
<dbReference type="InterPro" id="IPR001915">
    <property type="entry name" value="Peptidase_M48"/>
</dbReference>
<dbReference type="NCBIfam" id="NF003965">
    <property type="entry name" value="PRK05457.1"/>
    <property type="match status" value="1"/>
</dbReference>
<dbReference type="PANTHER" id="PTHR43221">
    <property type="entry name" value="PROTEASE HTPX"/>
    <property type="match status" value="1"/>
</dbReference>
<dbReference type="PANTHER" id="PTHR43221:SF1">
    <property type="entry name" value="PROTEASE HTPX"/>
    <property type="match status" value="1"/>
</dbReference>
<dbReference type="Pfam" id="PF01435">
    <property type="entry name" value="Peptidase_M48"/>
    <property type="match status" value="1"/>
</dbReference>
<comment type="cofactor">
    <cofactor evidence="1">
        <name>Zn(2+)</name>
        <dbReference type="ChEBI" id="CHEBI:29105"/>
    </cofactor>
    <text evidence="1">Binds 1 zinc ion per subunit.</text>
</comment>
<comment type="subcellular location">
    <subcellularLocation>
        <location evidence="1">Cell inner membrane</location>
        <topology evidence="1">Multi-pass membrane protein</topology>
    </subcellularLocation>
</comment>
<comment type="similarity">
    <text evidence="1">Belongs to the peptidase M48B family.</text>
</comment>
<protein>
    <recommendedName>
        <fullName evidence="1">Protease HtpX</fullName>
        <ecNumber evidence="1">3.4.24.-</ecNumber>
    </recommendedName>
    <alternativeName>
        <fullName evidence="1">Heat shock protein HtpX</fullName>
    </alternativeName>
</protein>
<keyword id="KW-0997">Cell inner membrane</keyword>
<keyword id="KW-1003">Cell membrane</keyword>
<keyword id="KW-0378">Hydrolase</keyword>
<keyword id="KW-0472">Membrane</keyword>
<keyword id="KW-0479">Metal-binding</keyword>
<keyword id="KW-0482">Metalloprotease</keyword>
<keyword id="KW-0645">Protease</keyword>
<keyword id="KW-0346">Stress response</keyword>
<keyword id="KW-0812">Transmembrane</keyword>
<keyword id="KW-1133">Transmembrane helix</keyword>
<keyword id="KW-0862">Zinc</keyword>
<gene>
    <name evidence="1" type="primary">htpX</name>
    <name type="ordered locus">YPTB2375</name>
</gene>
<sequence>MMRIALFLLTNLAVMLVFGLVLSLTGIQSSSVQGLMIMAGLFGFGGAFVSLLMSKWMALRSVGGEVIERPRNETEYWLLETVRRQSQQVGIAMPQVAIYQAPDINAFATGARRDASLVAVSTGLLQNMSRDEAEAVIAHEISHVANGDMVTMTLIQGVVNTFVIFISRLIAQIAAGFLSGDRDGESNSPGNPMVYFAVSMVLELVFGILASIITMWFSRHREFHADAGSAKLVGREKMIAALQRLKTSYEPQEAGSMMAFCINGKSKTFSELFMSHPPLDKRIEALRSGQYLK</sequence>